<gene>
    <name evidence="1" type="primary">rplU</name>
    <name type="ordered locus">BMA2523</name>
</gene>
<protein>
    <recommendedName>
        <fullName evidence="1">Large ribosomal subunit protein bL21</fullName>
    </recommendedName>
    <alternativeName>
        <fullName evidence="2">50S ribosomal protein L21</fullName>
    </alternativeName>
</protein>
<evidence type="ECO:0000255" key="1">
    <source>
        <dbReference type="HAMAP-Rule" id="MF_01363"/>
    </source>
</evidence>
<evidence type="ECO:0000305" key="2"/>
<dbReference type="EMBL" id="CP000010">
    <property type="protein sequence ID" value="AAU50091.1"/>
    <property type="molecule type" value="Genomic_DNA"/>
</dbReference>
<dbReference type="RefSeq" id="WP_004194344.1">
    <property type="nucleotide sequence ID" value="NC_006348.1"/>
</dbReference>
<dbReference type="RefSeq" id="YP_104069.1">
    <property type="nucleotide sequence ID" value="NC_006348.1"/>
</dbReference>
<dbReference type="SMR" id="Q62GV2"/>
<dbReference type="GeneID" id="93061605"/>
<dbReference type="KEGG" id="bma:BMA2523"/>
<dbReference type="PATRIC" id="fig|243160.12.peg.2603"/>
<dbReference type="eggNOG" id="COG0261">
    <property type="taxonomic scope" value="Bacteria"/>
</dbReference>
<dbReference type="HOGENOM" id="CLU_061463_3_1_4"/>
<dbReference type="PRO" id="PR:Q62GV2"/>
<dbReference type="Proteomes" id="UP000006693">
    <property type="component" value="Chromosome 1"/>
</dbReference>
<dbReference type="GO" id="GO:0005737">
    <property type="term" value="C:cytoplasm"/>
    <property type="evidence" value="ECO:0007669"/>
    <property type="project" value="UniProtKB-ARBA"/>
</dbReference>
<dbReference type="GO" id="GO:1990904">
    <property type="term" value="C:ribonucleoprotein complex"/>
    <property type="evidence" value="ECO:0007669"/>
    <property type="project" value="UniProtKB-KW"/>
</dbReference>
<dbReference type="GO" id="GO:0005840">
    <property type="term" value="C:ribosome"/>
    <property type="evidence" value="ECO:0007669"/>
    <property type="project" value="UniProtKB-KW"/>
</dbReference>
<dbReference type="GO" id="GO:0019843">
    <property type="term" value="F:rRNA binding"/>
    <property type="evidence" value="ECO:0007669"/>
    <property type="project" value="UniProtKB-UniRule"/>
</dbReference>
<dbReference type="GO" id="GO:0003735">
    <property type="term" value="F:structural constituent of ribosome"/>
    <property type="evidence" value="ECO:0007669"/>
    <property type="project" value="InterPro"/>
</dbReference>
<dbReference type="GO" id="GO:0006412">
    <property type="term" value="P:translation"/>
    <property type="evidence" value="ECO:0007669"/>
    <property type="project" value="UniProtKB-UniRule"/>
</dbReference>
<dbReference type="HAMAP" id="MF_01363">
    <property type="entry name" value="Ribosomal_bL21"/>
    <property type="match status" value="1"/>
</dbReference>
<dbReference type="InterPro" id="IPR028909">
    <property type="entry name" value="bL21-like"/>
</dbReference>
<dbReference type="InterPro" id="IPR036164">
    <property type="entry name" value="bL21-like_sf"/>
</dbReference>
<dbReference type="InterPro" id="IPR001787">
    <property type="entry name" value="Ribosomal_bL21"/>
</dbReference>
<dbReference type="InterPro" id="IPR018258">
    <property type="entry name" value="Ribosomal_bL21_CS"/>
</dbReference>
<dbReference type="NCBIfam" id="TIGR00061">
    <property type="entry name" value="L21"/>
    <property type="match status" value="1"/>
</dbReference>
<dbReference type="PANTHER" id="PTHR21349">
    <property type="entry name" value="50S RIBOSOMAL PROTEIN L21"/>
    <property type="match status" value="1"/>
</dbReference>
<dbReference type="PANTHER" id="PTHR21349:SF0">
    <property type="entry name" value="LARGE RIBOSOMAL SUBUNIT PROTEIN BL21M"/>
    <property type="match status" value="1"/>
</dbReference>
<dbReference type="Pfam" id="PF00829">
    <property type="entry name" value="Ribosomal_L21p"/>
    <property type="match status" value="1"/>
</dbReference>
<dbReference type="SUPFAM" id="SSF141091">
    <property type="entry name" value="L21p-like"/>
    <property type="match status" value="1"/>
</dbReference>
<dbReference type="PROSITE" id="PS01169">
    <property type="entry name" value="RIBOSOMAL_L21"/>
    <property type="match status" value="1"/>
</dbReference>
<accession>Q62GV2</accession>
<sequence>MYAVIKTGGKQYKVAVGEKLKVEQIPADIDAEITLDQVLAVGEGESIQFGTPLVSGASVKATVVSHGRHAKVTIFKMRRRKHYQKHGGHRQNYTELRIDAINA</sequence>
<proteinExistence type="inferred from homology"/>
<reference key="1">
    <citation type="journal article" date="2004" name="Proc. Natl. Acad. Sci. U.S.A.">
        <title>Structural flexibility in the Burkholderia mallei genome.</title>
        <authorList>
            <person name="Nierman W.C."/>
            <person name="DeShazer D."/>
            <person name="Kim H.S."/>
            <person name="Tettelin H."/>
            <person name="Nelson K.E."/>
            <person name="Feldblyum T.V."/>
            <person name="Ulrich R.L."/>
            <person name="Ronning C.M."/>
            <person name="Brinkac L.M."/>
            <person name="Daugherty S.C."/>
            <person name="Davidsen T.D."/>
            <person name="DeBoy R.T."/>
            <person name="Dimitrov G."/>
            <person name="Dodson R.J."/>
            <person name="Durkin A.S."/>
            <person name="Gwinn M.L."/>
            <person name="Haft D.H."/>
            <person name="Khouri H.M."/>
            <person name="Kolonay J.F."/>
            <person name="Madupu R."/>
            <person name="Mohammoud Y."/>
            <person name="Nelson W.C."/>
            <person name="Radune D."/>
            <person name="Romero C.M."/>
            <person name="Sarria S."/>
            <person name="Selengut J."/>
            <person name="Shamblin C."/>
            <person name="Sullivan S.A."/>
            <person name="White O."/>
            <person name="Yu Y."/>
            <person name="Zafar N."/>
            <person name="Zhou L."/>
            <person name="Fraser C.M."/>
        </authorList>
    </citation>
    <scope>NUCLEOTIDE SEQUENCE [LARGE SCALE GENOMIC DNA]</scope>
    <source>
        <strain>ATCC 23344</strain>
    </source>
</reference>
<comment type="function">
    <text evidence="1">This protein binds to 23S rRNA in the presence of protein L20.</text>
</comment>
<comment type="subunit">
    <text evidence="1">Part of the 50S ribosomal subunit. Contacts protein L20.</text>
</comment>
<comment type="similarity">
    <text evidence="1">Belongs to the bacterial ribosomal protein bL21 family.</text>
</comment>
<organism>
    <name type="scientific">Burkholderia mallei (strain ATCC 23344)</name>
    <dbReference type="NCBI Taxonomy" id="243160"/>
    <lineage>
        <taxon>Bacteria</taxon>
        <taxon>Pseudomonadati</taxon>
        <taxon>Pseudomonadota</taxon>
        <taxon>Betaproteobacteria</taxon>
        <taxon>Burkholderiales</taxon>
        <taxon>Burkholderiaceae</taxon>
        <taxon>Burkholderia</taxon>
        <taxon>pseudomallei group</taxon>
    </lineage>
</organism>
<name>RL21_BURMA</name>
<keyword id="KW-1185">Reference proteome</keyword>
<keyword id="KW-0687">Ribonucleoprotein</keyword>
<keyword id="KW-0689">Ribosomal protein</keyword>
<keyword id="KW-0694">RNA-binding</keyword>
<keyword id="KW-0699">rRNA-binding</keyword>
<feature type="chain" id="PRO_0000269294" description="Large ribosomal subunit protein bL21">
    <location>
        <begin position="1"/>
        <end position="103"/>
    </location>
</feature>